<feature type="chain" id="PRO_0000217067" description="Na(+)/H(+) antiporter subunit A1">
    <location>
        <begin position="1"/>
        <end position="801"/>
    </location>
</feature>
<feature type="transmembrane region" description="Helical" evidence="2">
    <location>
        <begin position="4"/>
        <end position="25"/>
    </location>
</feature>
<feature type="transmembrane region" description="Helical" evidence="2">
    <location>
        <begin position="30"/>
        <end position="49"/>
    </location>
</feature>
<feature type="transmembrane region" description="Helical" evidence="2">
    <location>
        <begin position="79"/>
        <end position="101"/>
    </location>
</feature>
<feature type="transmembrane region" description="Helical" evidence="2">
    <location>
        <begin position="108"/>
        <end position="127"/>
    </location>
</feature>
<feature type="transmembrane region" description="Helical" evidence="2">
    <location>
        <begin position="131"/>
        <end position="153"/>
    </location>
</feature>
<feature type="transmembrane region" description="Helical" evidence="2">
    <location>
        <begin position="166"/>
        <end position="188"/>
    </location>
</feature>
<feature type="transmembrane region" description="Helical" evidence="2">
    <location>
        <begin position="208"/>
        <end position="230"/>
    </location>
</feature>
<feature type="transmembrane region" description="Helical" evidence="2">
    <location>
        <begin position="243"/>
        <end position="265"/>
    </location>
</feature>
<feature type="transmembrane region" description="Helical" evidence="2">
    <location>
        <begin position="270"/>
        <end position="289"/>
    </location>
</feature>
<feature type="transmembrane region" description="Helical" evidence="2">
    <location>
        <begin position="302"/>
        <end position="324"/>
    </location>
</feature>
<feature type="transmembrane region" description="Helical" evidence="2">
    <location>
        <begin position="339"/>
        <end position="361"/>
    </location>
</feature>
<feature type="transmembrane region" description="Helical" evidence="2">
    <location>
        <begin position="373"/>
        <end position="395"/>
    </location>
</feature>
<feature type="transmembrane region" description="Helical" evidence="2">
    <location>
        <begin position="429"/>
        <end position="451"/>
    </location>
</feature>
<feature type="transmembrane region" description="Helical" evidence="2">
    <location>
        <begin position="472"/>
        <end position="494"/>
    </location>
</feature>
<feature type="transmembrane region" description="Helical" evidence="2">
    <location>
        <begin position="526"/>
        <end position="548"/>
    </location>
</feature>
<feature type="transmembrane region" description="Helical" evidence="2">
    <location>
        <begin position="589"/>
        <end position="611"/>
    </location>
</feature>
<feature type="transmembrane region" description="Helical" evidence="2">
    <location>
        <begin position="621"/>
        <end position="641"/>
    </location>
</feature>
<feature type="transmembrane region" description="Helical" evidence="2">
    <location>
        <begin position="646"/>
        <end position="668"/>
    </location>
</feature>
<feature type="transmembrane region" description="Helical" evidence="2">
    <location>
        <begin position="672"/>
        <end position="694"/>
    </location>
</feature>
<feature type="transmembrane region" description="Helical" evidence="2">
    <location>
        <begin position="707"/>
        <end position="729"/>
    </location>
</feature>
<feature type="transmembrane region" description="Helical" evidence="2">
    <location>
        <begin position="767"/>
        <end position="784"/>
    </location>
</feature>
<proteinExistence type="inferred from homology"/>
<keyword id="KW-0050">Antiport</keyword>
<keyword id="KW-1003">Cell membrane</keyword>
<keyword id="KW-0375">Hydrogen ion transport</keyword>
<keyword id="KW-0406">Ion transport</keyword>
<keyword id="KW-0472">Membrane</keyword>
<keyword id="KW-0915">Sodium</keyword>
<keyword id="KW-0739">Sodium transport</keyword>
<keyword id="KW-0812">Transmembrane</keyword>
<keyword id="KW-1133">Transmembrane helix</keyword>
<keyword id="KW-0813">Transport</keyword>
<gene>
    <name type="primary">mnhA1</name>
    <name type="ordered locus">SAV0952</name>
</gene>
<name>MNHA1_STAAM</name>
<dbReference type="EMBL" id="BA000017">
    <property type="protein sequence ID" value="BAB57114.1"/>
    <property type="molecule type" value="Genomic_DNA"/>
</dbReference>
<dbReference type="RefSeq" id="WP_000054612.1">
    <property type="nucleotide sequence ID" value="NC_002758.2"/>
</dbReference>
<dbReference type="SMR" id="P60674"/>
<dbReference type="KEGG" id="sav:SAV0952"/>
<dbReference type="HOGENOM" id="CLU_007100_2_1_9"/>
<dbReference type="PhylomeDB" id="P60674"/>
<dbReference type="Proteomes" id="UP000002481">
    <property type="component" value="Chromosome"/>
</dbReference>
<dbReference type="GO" id="GO:0005886">
    <property type="term" value="C:plasma membrane"/>
    <property type="evidence" value="ECO:0007669"/>
    <property type="project" value="UniProtKB-SubCell"/>
</dbReference>
<dbReference type="GO" id="GO:0015297">
    <property type="term" value="F:antiporter activity"/>
    <property type="evidence" value="ECO:0007669"/>
    <property type="project" value="UniProtKB-KW"/>
</dbReference>
<dbReference type="GO" id="GO:1902600">
    <property type="term" value="P:proton transmembrane transport"/>
    <property type="evidence" value="ECO:0007669"/>
    <property type="project" value="UniProtKB-KW"/>
</dbReference>
<dbReference type="GO" id="GO:0006814">
    <property type="term" value="P:sodium ion transport"/>
    <property type="evidence" value="ECO:0007669"/>
    <property type="project" value="UniProtKB-KW"/>
</dbReference>
<dbReference type="InterPro" id="IPR050616">
    <property type="entry name" value="CPA3_Na-H_Antiporter_A"/>
</dbReference>
<dbReference type="InterPro" id="IPR005663">
    <property type="entry name" value="MrpA/MnhA1/PhaAB"/>
</dbReference>
<dbReference type="InterPro" id="IPR025383">
    <property type="entry name" value="MrpA_C/MbhD"/>
</dbReference>
<dbReference type="InterPro" id="IPR046806">
    <property type="entry name" value="MrpA_C/MbhE"/>
</dbReference>
<dbReference type="InterPro" id="IPR001750">
    <property type="entry name" value="ND/Mrp_TM"/>
</dbReference>
<dbReference type="InterPro" id="IPR001516">
    <property type="entry name" value="Proton_antipo_N"/>
</dbReference>
<dbReference type="NCBIfam" id="TIGR00940">
    <property type="entry name" value="2a6301s01"/>
    <property type="match status" value="1"/>
</dbReference>
<dbReference type="NCBIfam" id="NF009285">
    <property type="entry name" value="PRK12645.1"/>
    <property type="match status" value="1"/>
</dbReference>
<dbReference type="PANTHER" id="PTHR43373">
    <property type="entry name" value="NA(+)/H(+) ANTIPORTER SUBUNIT"/>
    <property type="match status" value="1"/>
</dbReference>
<dbReference type="PANTHER" id="PTHR43373:SF1">
    <property type="entry name" value="NA(+)_H(+) ANTIPORTER SUBUNIT A"/>
    <property type="match status" value="1"/>
</dbReference>
<dbReference type="Pfam" id="PF13244">
    <property type="entry name" value="MbhD"/>
    <property type="match status" value="1"/>
</dbReference>
<dbReference type="Pfam" id="PF20501">
    <property type="entry name" value="MbhE"/>
    <property type="match status" value="1"/>
</dbReference>
<dbReference type="Pfam" id="PF00361">
    <property type="entry name" value="Proton_antipo_M"/>
    <property type="match status" value="1"/>
</dbReference>
<dbReference type="Pfam" id="PF00662">
    <property type="entry name" value="Proton_antipo_N"/>
    <property type="match status" value="1"/>
</dbReference>
<dbReference type="PRINTS" id="PR01434">
    <property type="entry name" value="NADHDHGNASE5"/>
</dbReference>
<dbReference type="PRINTS" id="PR01435">
    <property type="entry name" value="NPOXDRDTASE5"/>
</dbReference>
<organism>
    <name type="scientific">Staphylococcus aureus (strain Mu50 / ATCC 700699)</name>
    <dbReference type="NCBI Taxonomy" id="158878"/>
    <lineage>
        <taxon>Bacteria</taxon>
        <taxon>Bacillati</taxon>
        <taxon>Bacillota</taxon>
        <taxon>Bacilli</taxon>
        <taxon>Bacillales</taxon>
        <taxon>Staphylococcaceae</taxon>
        <taxon>Staphylococcus</taxon>
    </lineage>
</organism>
<accession>P60674</accession>
<accession>Q99VD5</accession>
<comment type="function">
    <text evidence="1">Mnh complex is a Na(+)/H(+) antiporter involved in Na(+) excretion.</text>
</comment>
<comment type="subunit">
    <text evidence="1">May form a heterooligomeric complex that consists of seven subunits: mnhA1, mnhB1, mnhC1, mnhD1, mnhE1, mnhF1 and mnhG1.</text>
</comment>
<comment type="subcellular location">
    <subcellularLocation>
        <location evidence="3">Cell membrane</location>
        <topology evidence="3">Multi-pass membrane protein</topology>
    </subcellularLocation>
</comment>
<comment type="similarity">
    <text evidence="3">Belongs to the CPA3 antiporters (TC 2.A.63) subunit A family.</text>
</comment>
<evidence type="ECO:0000250" key="1"/>
<evidence type="ECO:0000255" key="2"/>
<evidence type="ECO:0000305" key="3"/>
<sequence>MSLLHIAVILPLIFALIIPILYRFFKRIHLGWFVLPVPIVIFIYMLTLIKTTMSGNTVMKTLNWMPHFGMNFDLYLDGLGLLFSLLISGIGSLVVLYSIGYLSKSEQLGNFYCYLLLFMGAMLGVVLSDNVIILYLFWELTSFSSFLLISFWRERQASIYGAQKSLIITVFGGLSLLGGIILLAIPTQSFSIQYMIQHASEIQNSPFFIFAMILIMIGAFTKSAQFPFYIWLPDAMEAPTPVSAYLHSATMVKAGLYLIARMTPIFAASQGWVWTVTLVGLITLFWASLNATKQQDLKGILAFSTVSQLGMIMAMLGIGAISYHYQGDDSKIYAAAFTAAIFHLINHATFKGALFMITGAVDHSTGTRDVKKLGGLLTIMPISFTITVITALSMAGVPPFNGFLSKESFLETTFTASQANLFSVDTLGYLFPIIGIVGSVFTFVYSIKFIMHIFFGQYKPEQLPKKAHEVSILMLLSPAILATLVIVLGLFPGILTNSIIEPATSSINHTVIDDVEFHMFHGLTPAFLSTLVIYILGILLIVTFSYWVKLLQRQPGKLTFNYWYNRSANVIPNYSEKMTNSYVTDYSRNNLVIIFGALILLTFVTIFSVPFNINFKDVSPIRIFEVCIVILLLSAAFLILFAKSRLFSIIMLSAVGYAVSVLFIFFKAPDLALTQFVVESISTALFLLCFYHLPNLNRYNEKRSFQLTNALIAGGVGLSVIIIGLIAYGNRHFESISKFYQEHVYDLAHGKNMVNVILVDFRGMDTLFESSVLGIAGLAVYTMIKLRKKRQTQGNEVKNHE</sequence>
<reference key="1">
    <citation type="journal article" date="2001" name="Lancet">
        <title>Whole genome sequencing of meticillin-resistant Staphylococcus aureus.</title>
        <authorList>
            <person name="Kuroda M."/>
            <person name="Ohta T."/>
            <person name="Uchiyama I."/>
            <person name="Baba T."/>
            <person name="Yuzawa H."/>
            <person name="Kobayashi I."/>
            <person name="Cui L."/>
            <person name="Oguchi A."/>
            <person name="Aoki K."/>
            <person name="Nagai Y."/>
            <person name="Lian J.-Q."/>
            <person name="Ito T."/>
            <person name="Kanamori M."/>
            <person name="Matsumaru H."/>
            <person name="Maruyama A."/>
            <person name="Murakami H."/>
            <person name="Hosoyama A."/>
            <person name="Mizutani-Ui Y."/>
            <person name="Takahashi N.K."/>
            <person name="Sawano T."/>
            <person name="Inoue R."/>
            <person name="Kaito C."/>
            <person name="Sekimizu K."/>
            <person name="Hirakawa H."/>
            <person name="Kuhara S."/>
            <person name="Goto S."/>
            <person name="Yabuzaki J."/>
            <person name="Kanehisa M."/>
            <person name="Yamashita A."/>
            <person name="Oshima K."/>
            <person name="Furuya K."/>
            <person name="Yoshino C."/>
            <person name="Shiba T."/>
            <person name="Hattori M."/>
            <person name="Ogasawara N."/>
            <person name="Hayashi H."/>
            <person name="Hiramatsu K."/>
        </authorList>
    </citation>
    <scope>NUCLEOTIDE SEQUENCE [LARGE SCALE GENOMIC DNA]</scope>
    <source>
        <strain>Mu50 / ATCC 700699</strain>
    </source>
</reference>
<protein>
    <recommendedName>
        <fullName>Na(+)/H(+) antiporter subunit A1</fullName>
    </recommendedName>
    <alternativeName>
        <fullName>Mnh complex subunit A1</fullName>
    </alternativeName>
</protein>